<protein>
    <recommendedName>
        <fullName>Hainantoxin-XVII.3</fullName>
        <shortName>HNTX-XVII.3</shortName>
    </recommendedName>
    <alternativeName>
        <fullName>Peptide F2-20.97</fullName>
    </alternativeName>
</protein>
<accession>D2Y2C8</accession>
<feature type="signal peptide" evidence="2">
    <location>
        <begin position="1"/>
        <end position="40"/>
    </location>
</feature>
<feature type="propeptide" id="PRO_0000401031" evidence="5">
    <location>
        <begin position="41"/>
        <end position="64"/>
    </location>
</feature>
<feature type="peptide" id="PRO_0000401032" description="Hainantoxin-XVII.3" evidence="3">
    <location>
        <begin position="65"/>
        <end position="98"/>
    </location>
</feature>
<feature type="disulfide bond" evidence="1">
    <location>
        <begin position="66"/>
        <end position="81"/>
    </location>
</feature>
<feature type="disulfide bond" evidence="1">
    <location>
        <begin position="73"/>
        <end position="85"/>
    </location>
</feature>
<feature type="disulfide bond" evidence="1">
    <location>
        <begin position="80"/>
        <end position="95"/>
    </location>
</feature>
<organism>
    <name type="scientific">Cyriopagopus hainanus</name>
    <name type="common">Chinese bird spider</name>
    <name type="synonym">Haplopelma hainanum</name>
    <dbReference type="NCBI Taxonomy" id="209901"/>
    <lineage>
        <taxon>Eukaryota</taxon>
        <taxon>Metazoa</taxon>
        <taxon>Ecdysozoa</taxon>
        <taxon>Arthropoda</taxon>
        <taxon>Chelicerata</taxon>
        <taxon>Arachnida</taxon>
        <taxon>Araneae</taxon>
        <taxon>Mygalomorphae</taxon>
        <taxon>Theraphosidae</taxon>
        <taxon>Haplopelma</taxon>
    </lineage>
</organism>
<keyword id="KW-0903">Direct protein sequencing</keyword>
<keyword id="KW-1015">Disulfide bond</keyword>
<keyword id="KW-0872">Ion channel impairing toxin</keyword>
<keyword id="KW-0960">Knottin</keyword>
<keyword id="KW-0632">Potassium channel impairing toxin</keyword>
<keyword id="KW-0964">Secreted</keyword>
<keyword id="KW-0732">Signal</keyword>
<keyword id="KW-0800">Toxin</keyword>
<keyword id="KW-1220">Voltage-gated potassium channel impairing toxin</keyword>
<evidence type="ECO:0000250" key="1"/>
<evidence type="ECO:0000255" key="2"/>
<evidence type="ECO:0000269" key="3">
    <source>
    </source>
</evidence>
<evidence type="ECO:0000269" key="4">
    <source>
    </source>
</evidence>
<evidence type="ECO:0000305" key="5">
    <source>
    </source>
</evidence>
<proteinExistence type="evidence at protein level"/>
<sequence>MTTVGVSLFRRSPEKITMKIATFLGLSFLLIASYFLICEAQHPGFQELLILEENMRDPENSKERSCAKPRENCNRMNILCCRGECVCPTFGDCFCYGD</sequence>
<reference key="1">
    <citation type="journal article" date="2010" name="J. Proteome Res.">
        <title>Molecular diversification of peptide toxins from the tarantula Haplopelma hainanum (Ornithoctonus hainana) venom based on transcriptomic, peptidomic, and genomic analyses.</title>
        <authorList>
            <person name="Tang X."/>
            <person name="Zhang Y."/>
            <person name="Hu W."/>
            <person name="Xu D."/>
            <person name="Tao H."/>
            <person name="Yang X."/>
            <person name="Li Y."/>
            <person name="Jiang L."/>
            <person name="Liang S."/>
        </authorList>
    </citation>
    <scope>NUCLEOTIDE SEQUENCE [LARGE SCALE MRNA]</scope>
    <scope>PROTEIN SEQUENCE OF 65-98</scope>
    <scope>IDENTIFICATION BY MASS SPECTROMETRY</scope>
    <scope>SUBCELLULAR LOCATION</scope>
    <source>
        <tissue>Venom</tissue>
        <tissue>Venom gland</tissue>
    </source>
</reference>
<reference key="2">
    <citation type="journal article" date="2018" name="Nat. Struct. Mol. Biol.">
        <title>Screening, large-scale production and structure-based classification of cystine-dense peptides.</title>
        <authorList>
            <person name="Correnti C.E."/>
            <person name="Gewe M.M."/>
            <person name="Mehlin C."/>
            <person name="Bandaranayake A.D."/>
            <person name="Johnsen W.A."/>
            <person name="Rupert P.B."/>
            <person name="Brusniak M.Y."/>
            <person name="Clarke M."/>
            <person name="Burke S.E."/>
            <person name="De Van Der Schueren W."/>
            <person name="Pilat K."/>
            <person name="Turnbaugh S.M."/>
            <person name="May D."/>
            <person name="Watson A."/>
            <person name="Chan M.K."/>
            <person name="Bahl C.D."/>
            <person name="Olson J.M."/>
            <person name="Strong R.K."/>
        </authorList>
    </citation>
    <scope>FUNCTION</scope>
    <scope>SYNTHESIS OF 65-98</scope>
</reference>
<name>H17A3_CYRHA</name>
<comment type="function">
    <text evidence="4">Inhibits with low potency Kv1.2/KCNA2 and Kv1.3/KCNA3 voltage-gated potassium channels (PubMed:29483648).</text>
</comment>
<comment type="subcellular location">
    <subcellularLocation>
        <location evidence="3">Secreted</location>
    </subcellularLocation>
</comment>
<comment type="tissue specificity">
    <text evidence="5">Expressed by the venom gland.</text>
</comment>
<comment type="domain">
    <text evidence="1">The presence of a 'disulfide through disulfide knot' structurally defines this protein as a knottin.</text>
</comment>
<comment type="similarity">
    <text>Belongs to the hainantoxin family. 17 subfamily.</text>
</comment>
<dbReference type="EMBL" id="GU293005">
    <property type="protein sequence ID" value="ADB56821.1"/>
    <property type="molecule type" value="mRNA"/>
</dbReference>
<dbReference type="ArachnoServer" id="AS001987">
    <property type="toxin name" value="U12-theraphotoxin-Hhn1a"/>
</dbReference>
<dbReference type="GO" id="GO:0005576">
    <property type="term" value="C:extracellular region"/>
    <property type="evidence" value="ECO:0007669"/>
    <property type="project" value="UniProtKB-SubCell"/>
</dbReference>
<dbReference type="GO" id="GO:0015459">
    <property type="term" value="F:potassium channel regulator activity"/>
    <property type="evidence" value="ECO:0007669"/>
    <property type="project" value="UniProtKB-KW"/>
</dbReference>
<dbReference type="GO" id="GO:0090729">
    <property type="term" value="F:toxin activity"/>
    <property type="evidence" value="ECO:0007669"/>
    <property type="project" value="UniProtKB-KW"/>
</dbReference>